<sequence>MEAGYAEIAAVQFNIAGDNDHKRQGVMEVTISNLFEGTLPAEGGIYDARMGTTDHHYKCITCSHQRKQCMGHPGILQMHAPVLQPLFIAEIRRWLRVICLNCGAPIVDLKRYEHLIRPKRLVEAASGQTEGKQCYVCKVIHPKIIKDSEDYFTFWVDQQGKIDKLYPQIIREIFSRVTYDTVVKLGRSKNSHPEKLVLKAIQIPPISIRPGIRLGIGSGPQSFHDINNVIQYLVRKNLLIPKDLQIVRGQKIPLNVDRNLQTIQQLYYNFLLDSVSTTATQGGTGKRGIVMGARPAPSIMRRLPRKEGRIRKSLLGSQVWSISRSTICGNSDLHLDEVGYPISFARTLQVAETVQHYNINRLMPYFLNGKRQYPGCSRVYKQITQSVHDIEGLKQDFRLEVGDILYRDVVTGDVAFFNRQPSLERSSIGVHRIVVLENPKISTFQMNVSACAWYNADFDGDQMNLWVPWSVMSRVEAELLCSVRNWFISTKSSGPVNGQVQDSTVGSFLLTRTNTPMGKNVMNKLHAMGLFQTTQTDPPCFANYSPTDLLDGKSVVSMLLKQTPINYQRAPTWYSEVYAPYMHYNKQDISTQIRNGELIEGVLDKKAVGAGSSGGIYHLISRRYGPQQALKMIFATQQLALNYVRNAGFTVSTADMLLTPEAHQEVQEIINELLLESEEINNRLLHGDIMPPIGLTTHDFYEKLQLNALKFPDRILKPIMNSINPETNGLFQMVATGAKGSNPNMIHIMAGIGQIEINTQRIQPQFSFGRTLVYYPRFALEAQAYGFICNSYIAGLTSPEFIFGEMNGRFDLINKALSTSSTGYANRKAIFGLQSCIVDYYRRVSIDTRLVQQLYGEDGLDARQLETVRFETIMLSDQELEDKFKYTGIQSPLFEEEFSRLKKDRDKYRQIFLNIENFNFSQLLTDIRQVPVNVASIVKNILLSSTSGVLPFDEKSILQKYTMVKTFCKNLPYVFINNIQERLQTPIPVYLKRAASLMRMLIRIELATVKTLNITCEQMSAILDLIRLQYTQSLINYGEAVGILAAQSVSEPLTQYMLDSHHRSVAGGTNKSGIVRPQEIFSAKPVEAEQSSEMLLRLKNPEVETNKTYAQEIANSIELITFERLILQWHLLYETYSSTKKNVMYPDFASDVEWMTDFLENHPLLQPPEDIANWCIRLELNKTTMILKSISLESIINSLRAKHPNSYIMHSVENTASGIPIIIRIYLRESAFRRSTNTRMATDEKIAVNMVDKLLNSTIRGIPGIKNANVVKLMRHRVDAQGKLARLDNIYAIKTNGTNIFGAMLDDNIDPYTIVSSSIGDTMELYGIEAARQKIISEIRTVMGDKGPNHRHLLMYADLMTRTGQVTSLEKAGLNAREPSNVLLRMALSSPVQVLTDAAVDSAVNPIYGIAAPTLMGSVPRIGTMYSDIIMDEKYITENYKSVDSMIDML</sequence>
<comment type="function">
    <text evidence="1">Catalytic component of the DNA-directed RNA polymerase (RNAP) that catalyzes the transcription in the cytoplasm of viral DNA into RNA using the four ribonucleoside triphosphates as substrates (By similarity). Forms the polymerase active center together with RPB2 (By similarity). Part of the core element with the central large cleft, the clamp element that moves to open and close the cleft and the jaws that are thought to grab the incoming DNA template (By similarity).</text>
</comment>
<comment type="catalytic activity">
    <reaction>
        <text>RNA(n) + a ribonucleoside 5'-triphosphate = RNA(n+1) + diphosphate</text>
        <dbReference type="Rhea" id="RHEA:21248"/>
        <dbReference type="Rhea" id="RHEA-COMP:14527"/>
        <dbReference type="Rhea" id="RHEA-COMP:17342"/>
        <dbReference type="ChEBI" id="CHEBI:33019"/>
        <dbReference type="ChEBI" id="CHEBI:61557"/>
        <dbReference type="ChEBI" id="CHEBI:140395"/>
        <dbReference type="EC" id="2.7.7.6"/>
    </reaction>
</comment>
<comment type="subunit">
    <text evidence="2">Part of the viral DNA-directed RNA polymerase that consists of 8 polII-like subunits (RPB1, RPB2, RPB3, RPB5, RPB6, RPB7, RPB9, RPB10), a capping enzyme and a termination factor.</text>
</comment>
<comment type="subcellular location">
    <subcellularLocation>
        <location>Virion</location>
    </subcellularLocation>
    <text evidence="2">Found in association with viral nucleoid.</text>
</comment>
<comment type="induction">
    <text evidence="3">Expressed in the late phase of the viral replicative cycle.</text>
</comment>
<comment type="domain">
    <text evidence="2">Lacks the typical C-terminal domain (CTD).</text>
</comment>
<comment type="similarity">
    <text evidence="3">Belongs to the RNA polymerase beta' chain family.</text>
</comment>
<comment type="sequence caution" evidence="3">
    <conflict type="frameshift">
        <sequence resource="EMBL-CDS" id="CAA50804"/>
    </conflict>
</comment>
<accession>Q65215</accession>
<gene>
    <name type="ordered locus">Mal-107</name>
    <name type="ORF">g2L</name>
</gene>
<dbReference type="EC" id="2.7.7.6"/>
<dbReference type="EMBL" id="AY261361">
    <property type="status" value="NOT_ANNOTATED_CDS"/>
    <property type="molecule type" value="Genomic_DNA"/>
</dbReference>
<dbReference type="EMBL" id="X71982">
    <property type="protein sequence ID" value="CAA50804.1"/>
    <property type="status" value="ALT_FRAME"/>
    <property type="molecule type" value="Genomic_DNA"/>
</dbReference>
<dbReference type="SMR" id="Q65215"/>
<dbReference type="Proteomes" id="UP000000860">
    <property type="component" value="Segment"/>
</dbReference>
<dbReference type="GO" id="GO:0000428">
    <property type="term" value="C:DNA-directed RNA polymerase complex"/>
    <property type="evidence" value="ECO:0007669"/>
    <property type="project" value="UniProtKB-KW"/>
</dbReference>
<dbReference type="GO" id="GO:0044423">
    <property type="term" value="C:virion component"/>
    <property type="evidence" value="ECO:0007669"/>
    <property type="project" value="UniProtKB-KW"/>
</dbReference>
<dbReference type="GO" id="GO:0003677">
    <property type="term" value="F:DNA binding"/>
    <property type="evidence" value="ECO:0007669"/>
    <property type="project" value="InterPro"/>
</dbReference>
<dbReference type="GO" id="GO:0003899">
    <property type="term" value="F:DNA-directed RNA polymerase activity"/>
    <property type="evidence" value="ECO:0007669"/>
    <property type="project" value="UniProtKB-EC"/>
</dbReference>
<dbReference type="GO" id="GO:0006351">
    <property type="term" value="P:DNA-templated transcription"/>
    <property type="evidence" value="ECO:0007669"/>
    <property type="project" value="InterPro"/>
</dbReference>
<dbReference type="GO" id="GO:0019083">
    <property type="term" value="P:viral transcription"/>
    <property type="evidence" value="ECO:0007669"/>
    <property type="project" value="UniProtKB-KW"/>
</dbReference>
<dbReference type="Gene3D" id="1.10.132.30">
    <property type="match status" value="1"/>
</dbReference>
<dbReference type="Gene3D" id="2.40.40.20">
    <property type="match status" value="1"/>
</dbReference>
<dbReference type="Gene3D" id="3.30.1360.140">
    <property type="match status" value="1"/>
</dbReference>
<dbReference type="Gene3D" id="6.10.250.2940">
    <property type="match status" value="1"/>
</dbReference>
<dbReference type="Gene3D" id="3.30.1490.180">
    <property type="entry name" value="RNA polymerase ii"/>
    <property type="match status" value="1"/>
</dbReference>
<dbReference type="Gene3D" id="4.10.860.120">
    <property type="entry name" value="RNA polymerase II, clamp domain"/>
    <property type="match status" value="1"/>
</dbReference>
<dbReference type="Gene3D" id="1.10.274.100">
    <property type="entry name" value="RNA polymerase Rpb1, domain 3"/>
    <property type="match status" value="1"/>
</dbReference>
<dbReference type="InterPro" id="IPR045867">
    <property type="entry name" value="DNA-dir_RpoC_beta_prime"/>
</dbReference>
<dbReference type="InterPro" id="IPR000722">
    <property type="entry name" value="RNA_pol_asu"/>
</dbReference>
<dbReference type="InterPro" id="IPR006592">
    <property type="entry name" value="RNA_pol_N"/>
</dbReference>
<dbReference type="InterPro" id="IPR007080">
    <property type="entry name" value="RNA_pol_Rpb1_1"/>
</dbReference>
<dbReference type="InterPro" id="IPR007066">
    <property type="entry name" value="RNA_pol_Rpb1_3"/>
</dbReference>
<dbReference type="InterPro" id="IPR042102">
    <property type="entry name" value="RNA_pol_Rpb1_3_sf"/>
</dbReference>
<dbReference type="InterPro" id="IPR007083">
    <property type="entry name" value="RNA_pol_Rpb1_4"/>
</dbReference>
<dbReference type="InterPro" id="IPR007081">
    <property type="entry name" value="RNA_pol_Rpb1_5"/>
</dbReference>
<dbReference type="InterPro" id="IPR007073">
    <property type="entry name" value="RNA_pol_Rpb1_7"/>
</dbReference>
<dbReference type="InterPro" id="IPR038593">
    <property type="entry name" value="RNA_pol_Rpb1_7_sf"/>
</dbReference>
<dbReference type="InterPro" id="IPR044893">
    <property type="entry name" value="RNA_pol_Rpb1_clamp_domain"/>
</dbReference>
<dbReference type="InterPro" id="IPR038120">
    <property type="entry name" value="Rpb1_funnel_sf"/>
</dbReference>
<dbReference type="PANTHER" id="PTHR19376">
    <property type="entry name" value="DNA-DIRECTED RNA POLYMERASE"/>
    <property type="match status" value="1"/>
</dbReference>
<dbReference type="PANTHER" id="PTHR19376:SF11">
    <property type="entry name" value="DNA-DIRECTED RNA POLYMERASE I SUBUNIT RPA1"/>
    <property type="match status" value="1"/>
</dbReference>
<dbReference type="Pfam" id="PF04997">
    <property type="entry name" value="RNA_pol_Rpb1_1"/>
    <property type="match status" value="1"/>
</dbReference>
<dbReference type="Pfam" id="PF00623">
    <property type="entry name" value="RNA_pol_Rpb1_2"/>
    <property type="match status" value="1"/>
</dbReference>
<dbReference type="Pfam" id="PF04983">
    <property type="entry name" value="RNA_pol_Rpb1_3"/>
    <property type="match status" value="1"/>
</dbReference>
<dbReference type="Pfam" id="PF05000">
    <property type="entry name" value="RNA_pol_Rpb1_4"/>
    <property type="match status" value="1"/>
</dbReference>
<dbReference type="Pfam" id="PF04998">
    <property type="entry name" value="RNA_pol_Rpb1_5"/>
    <property type="match status" value="1"/>
</dbReference>
<dbReference type="Pfam" id="PF04990">
    <property type="entry name" value="RNA_pol_Rpb1_7"/>
    <property type="match status" value="1"/>
</dbReference>
<dbReference type="SMART" id="SM00663">
    <property type="entry name" value="RPOLA_N"/>
    <property type="match status" value="1"/>
</dbReference>
<dbReference type="SUPFAM" id="SSF64484">
    <property type="entry name" value="beta and beta-prime subunits of DNA dependent RNA-polymerase"/>
    <property type="match status" value="1"/>
</dbReference>
<organismHost>
    <name type="scientific">Ornithodoros</name>
    <name type="common">relapsing fever ticks</name>
    <dbReference type="NCBI Taxonomy" id="6937"/>
</organismHost>
<organismHost>
    <name type="scientific">Phacochoerus aethiopicus</name>
    <name type="common">Warthog</name>
    <dbReference type="NCBI Taxonomy" id="85517"/>
</organismHost>
<organismHost>
    <name type="scientific">Phacochoerus africanus</name>
    <name type="common">Warthog</name>
    <dbReference type="NCBI Taxonomy" id="41426"/>
</organismHost>
<organismHost>
    <name type="scientific">Potamochoerus larvatus</name>
    <name type="common">Bushpig</name>
    <dbReference type="NCBI Taxonomy" id="273792"/>
</organismHost>
<organismHost>
    <name type="scientific">Sus scrofa</name>
    <name type="common">Pig</name>
    <dbReference type="NCBI Taxonomy" id="9823"/>
</organismHost>
<proteinExistence type="inferred from homology"/>
<reference key="1">
    <citation type="submission" date="2003-03" db="EMBL/GenBank/DDBJ databases">
        <title>African swine fever virus genomes.</title>
        <authorList>
            <person name="Kutish G.F."/>
            <person name="Rock D.L."/>
        </authorList>
    </citation>
    <scope>NUCLEOTIDE SEQUENCE [LARGE SCALE GENOMIC DNA]</scope>
</reference>
<reference key="2">
    <citation type="journal article" date="1994" name="J. Gen. Virol.">
        <title>Nucleotide sequence of a 55 kbp region from the right end of the genome of a pathogenic African swine fever virus isolate (Malawi LIL20/1).</title>
        <authorList>
            <person name="Dixon L.K."/>
            <person name="Twigg S.R.F."/>
            <person name="Baylis S.A."/>
            <person name="Vydelingum S."/>
            <person name="Bristow C."/>
            <person name="Hammond J.M."/>
            <person name="Smith G.L."/>
        </authorList>
    </citation>
    <scope>NUCLEOTIDE SEQUENCE [GENOMIC DNA] OF 1-332</scope>
</reference>
<feature type="chain" id="PRO_5000146089" description="DNA-directed RNA polymerase RPB1 homolog">
    <location>
        <begin position="1"/>
        <end position="1450"/>
    </location>
</feature>
<feature type="sequence conflict" description="In Ref. 2; CAA50804." evidence="3" ref="2">
    <location>
        <position position="294"/>
    </location>
</feature>
<keyword id="KW-0240">DNA-directed RNA polymerase</keyword>
<keyword id="KW-0548">Nucleotidyltransferase</keyword>
<keyword id="KW-0804">Transcription</keyword>
<keyword id="KW-0808">Transferase</keyword>
<keyword id="KW-1195">Viral transcription</keyword>
<keyword id="KW-0946">Virion</keyword>
<protein>
    <recommendedName>
        <fullName evidence="2">DNA-directed RNA polymerase RPB1 homolog</fullName>
        <shortName evidence="3">RPB1 homolog</shortName>
        <ecNumber>2.7.7.6</ecNumber>
    </recommendedName>
</protein>
<evidence type="ECO:0000250" key="1">
    <source>
        <dbReference type="UniProtKB" id="P24928"/>
    </source>
</evidence>
<evidence type="ECO:0000250" key="2">
    <source>
        <dbReference type="UniProtKB" id="P42486"/>
    </source>
</evidence>
<evidence type="ECO:0000305" key="3"/>
<name>RPB1_ASFM2</name>
<organism>
    <name type="scientific">African swine fever virus (isolate Tick/Malawi/Lil 20-1/1983)</name>
    <name type="common">ASFV</name>
    <dbReference type="NCBI Taxonomy" id="10500"/>
    <lineage>
        <taxon>Viruses</taxon>
        <taxon>Varidnaviria</taxon>
        <taxon>Bamfordvirae</taxon>
        <taxon>Nucleocytoviricota</taxon>
        <taxon>Pokkesviricetes</taxon>
        <taxon>Asfuvirales</taxon>
        <taxon>Asfarviridae</taxon>
        <taxon>Asfivirus</taxon>
        <taxon>African swine fever virus</taxon>
    </lineage>
</organism>